<protein>
    <recommendedName>
        <fullName>Netrin receptor UNC5C</fullName>
    </recommendedName>
    <alternativeName>
        <fullName>Protein unc-5 homolog 3</fullName>
    </alternativeName>
    <alternativeName>
        <fullName>Protein unc-5 homolog C</fullName>
    </alternativeName>
</protein>
<accession>O95185</accession>
<accession>Q8IUT0</accession>
<reference key="1">
    <citation type="journal article" date="1998" name="Genomics">
        <title>Cloning and mapping of the UNC5C gene to human chromosome 4q21-q23.</title>
        <authorList>
            <person name="Ackerman S.L."/>
            <person name="Knowles B.B."/>
        </authorList>
    </citation>
    <scope>NUCLEOTIDE SEQUENCE [MRNA] (ISOFORM 1)</scope>
    <scope>TISSUE SPECIFICITY</scope>
    <scope>VARIANT THR-721</scope>
    <source>
        <tissue>Brain</tissue>
    </source>
</reference>
<reference key="2">
    <citation type="journal article" date="2005" name="Nature">
        <title>Generation and annotation of the DNA sequences of human chromosomes 2 and 4.</title>
        <authorList>
            <person name="Hillier L.W."/>
            <person name="Graves T.A."/>
            <person name="Fulton R.S."/>
            <person name="Fulton L.A."/>
            <person name="Pepin K.H."/>
            <person name="Minx P."/>
            <person name="Wagner-McPherson C."/>
            <person name="Layman D."/>
            <person name="Wylie K."/>
            <person name="Sekhon M."/>
            <person name="Becker M.C."/>
            <person name="Fewell G.A."/>
            <person name="Delehaunty K.D."/>
            <person name="Miner T.L."/>
            <person name="Nash W.E."/>
            <person name="Kremitzki C."/>
            <person name="Oddy L."/>
            <person name="Du H."/>
            <person name="Sun H."/>
            <person name="Bradshaw-Cordum H."/>
            <person name="Ali J."/>
            <person name="Carter J."/>
            <person name="Cordes M."/>
            <person name="Harris A."/>
            <person name="Isak A."/>
            <person name="van Brunt A."/>
            <person name="Nguyen C."/>
            <person name="Du F."/>
            <person name="Courtney L."/>
            <person name="Kalicki J."/>
            <person name="Ozersky P."/>
            <person name="Abbott S."/>
            <person name="Armstrong J."/>
            <person name="Belter E.A."/>
            <person name="Caruso L."/>
            <person name="Cedroni M."/>
            <person name="Cotton M."/>
            <person name="Davidson T."/>
            <person name="Desai A."/>
            <person name="Elliott G."/>
            <person name="Erb T."/>
            <person name="Fronick C."/>
            <person name="Gaige T."/>
            <person name="Haakenson W."/>
            <person name="Haglund K."/>
            <person name="Holmes A."/>
            <person name="Harkins R."/>
            <person name="Kim K."/>
            <person name="Kruchowski S.S."/>
            <person name="Strong C.M."/>
            <person name="Grewal N."/>
            <person name="Goyea E."/>
            <person name="Hou S."/>
            <person name="Levy A."/>
            <person name="Martinka S."/>
            <person name="Mead K."/>
            <person name="McLellan M.D."/>
            <person name="Meyer R."/>
            <person name="Randall-Maher J."/>
            <person name="Tomlinson C."/>
            <person name="Dauphin-Kohlberg S."/>
            <person name="Kozlowicz-Reilly A."/>
            <person name="Shah N."/>
            <person name="Swearengen-Shahid S."/>
            <person name="Snider J."/>
            <person name="Strong J.T."/>
            <person name="Thompson J."/>
            <person name="Yoakum M."/>
            <person name="Leonard S."/>
            <person name="Pearman C."/>
            <person name="Trani L."/>
            <person name="Radionenko M."/>
            <person name="Waligorski J.E."/>
            <person name="Wang C."/>
            <person name="Rock S.M."/>
            <person name="Tin-Wollam A.-M."/>
            <person name="Maupin R."/>
            <person name="Latreille P."/>
            <person name="Wendl M.C."/>
            <person name="Yang S.-P."/>
            <person name="Pohl C."/>
            <person name="Wallis J.W."/>
            <person name="Spieth J."/>
            <person name="Bieri T.A."/>
            <person name="Berkowicz N."/>
            <person name="Nelson J.O."/>
            <person name="Osborne J."/>
            <person name="Ding L."/>
            <person name="Meyer R."/>
            <person name="Sabo A."/>
            <person name="Shotland Y."/>
            <person name="Sinha P."/>
            <person name="Wohldmann P.E."/>
            <person name="Cook L.L."/>
            <person name="Hickenbotham M.T."/>
            <person name="Eldred J."/>
            <person name="Williams D."/>
            <person name="Jones T.A."/>
            <person name="She X."/>
            <person name="Ciccarelli F.D."/>
            <person name="Izaurralde E."/>
            <person name="Taylor J."/>
            <person name="Schmutz J."/>
            <person name="Myers R.M."/>
            <person name="Cox D.R."/>
            <person name="Huang X."/>
            <person name="McPherson J.D."/>
            <person name="Mardis E.R."/>
            <person name="Clifton S.W."/>
            <person name="Warren W.C."/>
            <person name="Chinwalla A.T."/>
            <person name="Eddy S.R."/>
            <person name="Marra M.A."/>
            <person name="Ovcharenko I."/>
            <person name="Furey T.S."/>
            <person name="Miller W."/>
            <person name="Eichler E.E."/>
            <person name="Bork P."/>
            <person name="Suyama M."/>
            <person name="Torrents D."/>
            <person name="Waterston R.H."/>
            <person name="Wilson R.K."/>
        </authorList>
    </citation>
    <scope>NUCLEOTIDE SEQUENCE [LARGE SCALE GENOMIC DNA]</scope>
</reference>
<reference key="3">
    <citation type="journal article" date="2004" name="Genome Res.">
        <title>The status, quality, and expansion of the NIH full-length cDNA project: the Mammalian Gene Collection (MGC).</title>
        <authorList>
            <consortium name="The MGC Project Team"/>
        </authorList>
    </citation>
    <scope>NUCLEOTIDE SEQUENCE [LARGE SCALE MRNA] (ISOFORM 2)</scope>
    <source>
        <tissue>Lung</tissue>
    </source>
</reference>
<reference key="4">
    <citation type="journal article" date="2003" name="Proc. Natl. Acad. Sci. U.S.A.">
        <title>The netrin-1 receptors UNC5H are putative tumor suppressors controlling cell death commitment.</title>
        <authorList>
            <person name="Thiebault K."/>
            <person name="Mazelin L."/>
            <person name="Pays L."/>
            <person name="Llambi F."/>
            <person name="Joly M.-O."/>
            <person name="Scoazec J.-Y."/>
            <person name="Saurin J.-C."/>
            <person name="Romeo G."/>
            <person name="Mehlen P."/>
        </authorList>
    </citation>
    <scope>DOWN-REGULATION IN CANCER</scope>
</reference>
<reference key="5">
    <citation type="journal article" date="2012" name="J. Biol. Chem.">
        <title>Down syndrome cell adhesion molecule (DSCAM) associates with uncoordinated-5C (UNC5C) in netrin-1-mediated growth cone collapse.</title>
        <authorList>
            <person name="Purohit A.A."/>
            <person name="Li W."/>
            <person name="Qu C."/>
            <person name="Dwyer T."/>
            <person name="Shao Q."/>
            <person name="Guan K.L."/>
            <person name="Liu G."/>
        </authorList>
    </citation>
    <scope>INTERACTION WITH DSCAM</scope>
</reference>
<reference key="6">
    <citation type="journal article" date="2014" name="Nat. Med.">
        <title>A rare mutation in UNC5C predisposes to late-onset Alzheimer's disease and increases neuronal cell death.</title>
        <authorList>
            <consortium name="Alzheimer's Disease Genetics Consortium"/>
            <person name="Wetzel-Smith M.K."/>
            <person name="Hunkapiller J."/>
            <person name="Bhangale T.R."/>
            <person name="Srinivasan K."/>
            <person name="Maloney J.A."/>
            <person name="Atwal J.K."/>
            <person name="Sa S.M."/>
            <person name="Yaylaoglu M.B."/>
            <person name="Foreman O."/>
            <person name="Ortmann W."/>
            <person name="Rathore N."/>
            <person name="Hansen D.V."/>
            <person name="Tessier-Lavigne M."/>
            <person name="Mayeux R."/>
            <person name="Pericak-Vance M."/>
            <person name="Haines J."/>
            <person name="Farrer L.A."/>
            <person name="Schellenberg G.D."/>
            <person name="Goate A."/>
            <person name="Behrens T.W."/>
            <person name="Cruchaga C."/>
            <person name="Watts R.J."/>
            <person name="Graham R.R."/>
        </authorList>
    </citation>
    <scope>SUBCELLULAR LOCATION</scope>
    <scope>TISSUE SPECIFICITY</scope>
    <scope>INVOLVEMENT IN AD</scope>
    <scope>VARIANT AD MET-835</scope>
    <scope>CHARACTERIZATION OF VARIANT AD MET-835</scope>
</reference>
<reference key="7">
    <citation type="journal article" date="2016" name="J. Biol. Chem.">
        <title>An Alzheimer Disease-linked Rare Mutation Potentiates Netrin Receptor Uncoordinated-5C-induced Signaling That Merges with Amyloid beta Precursor Protein Signaling.</title>
        <authorList>
            <person name="Hashimoto Y."/>
            <person name="Toyama Y."/>
            <person name="Kusakari S."/>
            <person name="Nawa M."/>
            <person name="Matsuoka M."/>
        </authorList>
    </citation>
    <scope>INTERACTION WITH DAPK1</scope>
    <scope>CHARACTERIZATION OF VARIANT AD MET-835</scope>
</reference>
<reference key="8">
    <citation type="journal article" date="2017" name="J. Neurosci.">
        <title>Uncoupling of UNC5C with Polymerized TUBB3 in Microtubules Mediates Netrin-1 Repulsion.</title>
        <authorList>
            <person name="Shao Q."/>
            <person name="Yang T."/>
            <person name="Huang H."/>
            <person name="Alarmanazi F."/>
            <person name="Liu G."/>
        </authorList>
    </citation>
    <scope>FUNCTION</scope>
    <scope>INTERACTION WITH TUBB3</scope>
</reference>
<dbReference type="EMBL" id="AF055634">
    <property type="protein sequence ID" value="AAC67491.1"/>
    <property type="molecule type" value="mRNA"/>
</dbReference>
<dbReference type="EMBL" id="AC098584">
    <property type="status" value="NOT_ANNOTATED_CDS"/>
    <property type="molecule type" value="Genomic_DNA"/>
</dbReference>
<dbReference type="EMBL" id="AC105395">
    <property type="status" value="NOT_ANNOTATED_CDS"/>
    <property type="molecule type" value="Genomic_DNA"/>
</dbReference>
<dbReference type="EMBL" id="AC106881">
    <property type="status" value="NOT_ANNOTATED_CDS"/>
    <property type="molecule type" value="Genomic_DNA"/>
</dbReference>
<dbReference type="EMBL" id="BC041156">
    <property type="protein sequence ID" value="AAH41156.1"/>
    <property type="molecule type" value="mRNA"/>
</dbReference>
<dbReference type="CCDS" id="CCDS3643.1">
    <molecule id="O95185-1"/>
</dbReference>
<dbReference type="RefSeq" id="NP_003719.3">
    <molecule id="O95185-1"/>
    <property type="nucleotide sequence ID" value="NM_003728.3"/>
</dbReference>
<dbReference type="SMR" id="O95185"/>
<dbReference type="BioGRID" id="114186">
    <property type="interactions" value="34"/>
</dbReference>
<dbReference type="DIP" id="DIP-46276N"/>
<dbReference type="FunCoup" id="O95185">
    <property type="interactions" value="326"/>
</dbReference>
<dbReference type="IntAct" id="O95185">
    <property type="interactions" value="9"/>
</dbReference>
<dbReference type="MINT" id="O95185"/>
<dbReference type="STRING" id="9606.ENSP00000406022"/>
<dbReference type="GlyCosmos" id="O95185">
    <property type="glycosylation" value="2 sites, No reported glycans"/>
</dbReference>
<dbReference type="GlyGen" id="O95185">
    <property type="glycosylation" value="3 sites, 1 O-linked glycan (1 site)"/>
</dbReference>
<dbReference type="iPTMnet" id="O95185"/>
<dbReference type="PhosphoSitePlus" id="O95185"/>
<dbReference type="BioMuta" id="UNC5C"/>
<dbReference type="jPOST" id="O95185"/>
<dbReference type="MassIVE" id="O95185"/>
<dbReference type="PaxDb" id="9606-ENSP00000406022"/>
<dbReference type="PeptideAtlas" id="O95185"/>
<dbReference type="ProteomicsDB" id="50694">
    <molecule id="O95185-1"/>
</dbReference>
<dbReference type="ProteomicsDB" id="50695">
    <molecule id="O95185-2"/>
</dbReference>
<dbReference type="Pumba" id="O95185"/>
<dbReference type="Antibodypedia" id="2665">
    <property type="antibodies" value="257 antibodies from 33 providers"/>
</dbReference>
<dbReference type="DNASU" id="8633"/>
<dbReference type="Ensembl" id="ENST00000453304.6">
    <molecule id="O95185-1"/>
    <property type="protein sequence ID" value="ENSP00000406022.1"/>
    <property type="gene ID" value="ENSG00000182168.16"/>
</dbReference>
<dbReference type="Ensembl" id="ENST00000506749.5">
    <molecule id="O95185-2"/>
    <property type="protein sequence ID" value="ENSP00000426153.1"/>
    <property type="gene ID" value="ENSG00000182168.16"/>
</dbReference>
<dbReference type="GeneID" id="8633"/>
<dbReference type="KEGG" id="hsa:8633"/>
<dbReference type="MANE-Select" id="ENST00000453304.6">
    <property type="protein sequence ID" value="ENSP00000406022.1"/>
    <property type="RefSeq nucleotide sequence ID" value="NM_003728.4"/>
    <property type="RefSeq protein sequence ID" value="NP_003719.3"/>
</dbReference>
<dbReference type="UCSC" id="uc003hto.4">
    <molecule id="O95185-1"/>
    <property type="organism name" value="human"/>
</dbReference>
<dbReference type="AGR" id="HGNC:12569"/>
<dbReference type="CTD" id="8633"/>
<dbReference type="DisGeNET" id="8633"/>
<dbReference type="GeneCards" id="UNC5C"/>
<dbReference type="HGNC" id="HGNC:12569">
    <property type="gene designation" value="UNC5C"/>
</dbReference>
<dbReference type="HPA" id="ENSG00000182168">
    <property type="expression patterns" value="Tissue enhanced (thyroid)"/>
</dbReference>
<dbReference type="MalaCards" id="UNC5C"/>
<dbReference type="MIM" id="104300">
    <property type="type" value="phenotype"/>
</dbReference>
<dbReference type="MIM" id="603610">
    <property type="type" value="gene"/>
</dbReference>
<dbReference type="neXtProt" id="NX_O95185"/>
<dbReference type="OpenTargets" id="ENSG00000182168"/>
<dbReference type="PharmGKB" id="PA37206"/>
<dbReference type="VEuPathDB" id="HostDB:ENSG00000182168"/>
<dbReference type="eggNOG" id="KOG1480">
    <property type="taxonomic scope" value="Eukaryota"/>
</dbReference>
<dbReference type="GeneTree" id="ENSGT00950000182815"/>
<dbReference type="HOGENOM" id="CLU_014383_2_1_1"/>
<dbReference type="InParanoid" id="O95185"/>
<dbReference type="OMA" id="CECQAWS"/>
<dbReference type="OrthoDB" id="5973910at2759"/>
<dbReference type="PAN-GO" id="O95185">
    <property type="GO annotations" value="2 GO annotations based on evolutionary models"/>
</dbReference>
<dbReference type="PhylomeDB" id="O95185"/>
<dbReference type="TreeFam" id="TF316767"/>
<dbReference type="PathwayCommons" id="O95185"/>
<dbReference type="Reactome" id="R-HSA-418886">
    <property type="pathway name" value="Netrin mediated repulsion signals"/>
</dbReference>
<dbReference type="SignaLink" id="O95185"/>
<dbReference type="SIGNOR" id="O95185"/>
<dbReference type="BioGRID-ORCS" id="8633">
    <property type="hits" value="6 hits in 1142 CRISPR screens"/>
</dbReference>
<dbReference type="ChiTaRS" id="UNC5C">
    <property type="organism name" value="human"/>
</dbReference>
<dbReference type="GeneWiki" id="UNC5C"/>
<dbReference type="GenomeRNAi" id="8633"/>
<dbReference type="Pharos" id="O95185">
    <property type="development level" value="Tbio"/>
</dbReference>
<dbReference type="PRO" id="PR:O95185"/>
<dbReference type="Proteomes" id="UP000005640">
    <property type="component" value="Chromosome 4"/>
</dbReference>
<dbReference type="RNAct" id="O95185">
    <property type="molecule type" value="protein"/>
</dbReference>
<dbReference type="Bgee" id="ENSG00000182168">
    <property type="expression patterns" value="Expressed in corpus callosum and 134 other cell types or tissues"/>
</dbReference>
<dbReference type="ExpressionAtlas" id="O95185">
    <property type="expression patterns" value="baseline and differential"/>
</dbReference>
<dbReference type="GO" id="GO:0009986">
    <property type="term" value="C:cell surface"/>
    <property type="evidence" value="ECO:0007669"/>
    <property type="project" value="UniProtKB-SubCell"/>
</dbReference>
<dbReference type="GO" id="GO:0030425">
    <property type="term" value="C:dendrite"/>
    <property type="evidence" value="ECO:0007669"/>
    <property type="project" value="UniProtKB-SubCell"/>
</dbReference>
<dbReference type="GO" id="GO:0030175">
    <property type="term" value="C:filopodium"/>
    <property type="evidence" value="ECO:0000250"/>
    <property type="project" value="UniProtKB"/>
</dbReference>
<dbReference type="GO" id="GO:0030426">
    <property type="term" value="C:growth cone"/>
    <property type="evidence" value="ECO:0000250"/>
    <property type="project" value="UniProtKB"/>
</dbReference>
<dbReference type="GO" id="GO:0030027">
    <property type="term" value="C:lamellipodium"/>
    <property type="evidence" value="ECO:0000250"/>
    <property type="project" value="UniProtKB"/>
</dbReference>
<dbReference type="GO" id="GO:0043025">
    <property type="term" value="C:neuronal cell body"/>
    <property type="evidence" value="ECO:0007669"/>
    <property type="project" value="Ensembl"/>
</dbReference>
<dbReference type="GO" id="GO:0005886">
    <property type="term" value="C:plasma membrane"/>
    <property type="evidence" value="ECO:0000314"/>
    <property type="project" value="UniProtKB"/>
</dbReference>
<dbReference type="GO" id="GO:0045202">
    <property type="term" value="C:synapse"/>
    <property type="evidence" value="ECO:0007669"/>
    <property type="project" value="UniProtKB-SubCell"/>
</dbReference>
<dbReference type="GO" id="GO:0005042">
    <property type="term" value="F:netrin receptor activity"/>
    <property type="evidence" value="ECO:0000318"/>
    <property type="project" value="GO_Central"/>
</dbReference>
<dbReference type="GO" id="GO:0005043">
    <property type="term" value="F:netrin receptor activity involved in chemorepulsion"/>
    <property type="evidence" value="ECO:0000250"/>
    <property type="project" value="UniProtKB"/>
</dbReference>
<dbReference type="GO" id="GO:0019901">
    <property type="term" value="F:protein kinase binding"/>
    <property type="evidence" value="ECO:0000353"/>
    <property type="project" value="UniProtKB"/>
</dbReference>
<dbReference type="GO" id="GO:0015631">
    <property type="term" value="F:tubulin binding"/>
    <property type="evidence" value="ECO:0000353"/>
    <property type="project" value="UniProtKB"/>
</dbReference>
<dbReference type="GO" id="GO:0033564">
    <property type="term" value="P:anterior/posterior axon guidance"/>
    <property type="evidence" value="ECO:0007669"/>
    <property type="project" value="Ensembl"/>
</dbReference>
<dbReference type="GO" id="GO:0006915">
    <property type="term" value="P:apoptotic process"/>
    <property type="evidence" value="ECO:0007669"/>
    <property type="project" value="UniProtKB-KW"/>
</dbReference>
<dbReference type="GO" id="GO:0007411">
    <property type="term" value="P:axon guidance"/>
    <property type="evidence" value="ECO:0000318"/>
    <property type="project" value="GO_Central"/>
</dbReference>
<dbReference type="GO" id="GO:0007420">
    <property type="term" value="P:brain development"/>
    <property type="evidence" value="ECO:0000304"/>
    <property type="project" value="ProtInc"/>
</dbReference>
<dbReference type="GO" id="GO:0061643">
    <property type="term" value="P:chemorepulsion of axon"/>
    <property type="evidence" value="ECO:0000250"/>
    <property type="project" value="UniProtKB"/>
</dbReference>
<dbReference type="GO" id="GO:1990791">
    <property type="term" value="P:dorsal root ganglion development"/>
    <property type="evidence" value="ECO:0000314"/>
    <property type="project" value="UniProtKB"/>
</dbReference>
<dbReference type="GO" id="GO:0035234">
    <property type="term" value="P:ectopic germ cell programmed cell death"/>
    <property type="evidence" value="ECO:0007669"/>
    <property type="project" value="Ensembl"/>
</dbReference>
<dbReference type="GO" id="GO:0043065">
    <property type="term" value="P:positive regulation of apoptotic process"/>
    <property type="evidence" value="ECO:0007669"/>
    <property type="project" value="Ensembl"/>
</dbReference>
<dbReference type="GO" id="GO:0051094">
    <property type="term" value="P:positive regulation of developmental process"/>
    <property type="evidence" value="ECO:0007669"/>
    <property type="project" value="Ensembl"/>
</dbReference>
<dbReference type="GO" id="GO:2000243">
    <property type="term" value="P:positive regulation of reproductive process"/>
    <property type="evidence" value="ECO:0007669"/>
    <property type="project" value="Ensembl"/>
</dbReference>
<dbReference type="GO" id="GO:2001222">
    <property type="term" value="P:regulation of neuron migration"/>
    <property type="evidence" value="ECO:0007669"/>
    <property type="project" value="Ensembl"/>
</dbReference>
<dbReference type="CDD" id="cd08799">
    <property type="entry name" value="Death_UNC5C"/>
    <property type="match status" value="1"/>
</dbReference>
<dbReference type="FunFam" id="1.10.533.10:FF:000001">
    <property type="entry name" value="Unc-5 netrin receptor B"/>
    <property type="match status" value="1"/>
</dbReference>
<dbReference type="FunFam" id="2.20.100.10:FF:000002">
    <property type="entry name" value="Unc-5 netrin receptor C"/>
    <property type="match status" value="1"/>
</dbReference>
<dbReference type="FunFam" id="2.20.100.10:FF:000008">
    <property type="entry name" value="Unc-5 netrin receptor C"/>
    <property type="match status" value="1"/>
</dbReference>
<dbReference type="FunFam" id="2.60.220.30:FF:000003">
    <property type="entry name" value="Unc-5 netrin receptor C"/>
    <property type="match status" value="1"/>
</dbReference>
<dbReference type="FunFam" id="2.60.40.10:FF:000037">
    <property type="entry name" value="Unc-5 netrin receptor C"/>
    <property type="match status" value="1"/>
</dbReference>
<dbReference type="FunFam" id="2.60.40.10:FF:000039">
    <property type="entry name" value="Unc-5 netrin receptor C"/>
    <property type="match status" value="1"/>
</dbReference>
<dbReference type="Gene3D" id="2.60.220.30">
    <property type="match status" value="1"/>
</dbReference>
<dbReference type="Gene3D" id="1.10.533.10">
    <property type="entry name" value="Death Domain, Fas"/>
    <property type="match status" value="1"/>
</dbReference>
<dbReference type="Gene3D" id="2.60.40.10">
    <property type="entry name" value="Immunoglobulins"/>
    <property type="match status" value="2"/>
</dbReference>
<dbReference type="Gene3D" id="2.20.100.10">
    <property type="entry name" value="Thrombospondin type-1 (TSP1) repeat"/>
    <property type="match status" value="2"/>
</dbReference>
<dbReference type="InterPro" id="IPR011029">
    <property type="entry name" value="DEATH-like_dom_sf"/>
</dbReference>
<dbReference type="InterPro" id="IPR000488">
    <property type="entry name" value="Death_dom"/>
</dbReference>
<dbReference type="InterPro" id="IPR042154">
    <property type="entry name" value="Death_UNC5C"/>
</dbReference>
<dbReference type="InterPro" id="IPR007110">
    <property type="entry name" value="Ig-like_dom"/>
</dbReference>
<dbReference type="InterPro" id="IPR036179">
    <property type="entry name" value="Ig-like_dom_sf"/>
</dbReference>
<dbReference type="InterPro" id="IPR013783">
    <property type="entry name" value="Ig-like_fold"/>
</dbReference>
<dbReference type="InterPro" id="IPR013098">
    <property type="entry name" value="Ig_I-set"/>
</dbReference>
<dbReference type="InterPro" id="IPR003599">
    <property type="entry name" value="Ig_sub"/>
</dbReference>
<dbReference type="InterPro" id="IPR003598">
    <property type="entry name" value="Ig_sub2"/>
</dbReference>
<dbReference type="InterPro" id="IPR000884">
    <property type="entry name" value="TSP1_rpt"/>
</dbReference>
<dbReference type="InterPro" id="IPR036383">
    <property type="entry name" value="TSP1_rpt_sf"/>
</dbReference>
<dbReference type="InterPro" id="IPR037936">
    <property type="entry name" value="UNC5"/>
</dbReference>
<dbReference type="InterPro" id="IPR033772">
    <property type="entry name" value="UPA"/>
</dbReference>
<dbReference type="InterPro" id="IPR000906">
    <property type="entry name" value="ZU5_dom"/>
</dbReference>
<dbReference type="PANTHER" id="PTHR12582">
    <property type="entry name" value="NETRIN RECEPTOR UNC5"/>
    <property type="match status" value="1"/>
</dbReference>
<dbReference type="PANTHER" id="PTHR12582:SF7">
    <property type="entry name" value="NETRIN RECEPTOR UNC5C"/>
    <property type="match status" value="1"/>
</dbReference>
<dbReference type="Pfam" id="PF00531">
    <property type="entry name" value="Death"/>
    <property type="match status" value="1"/>
</dbReference>
<dbReference type="Pfam" id="PF07679">
    <property type="entry name" value="I-set"/>
    <property type="match status" value="1"/>
</dbReference>
<dbReference type="Pfam" id="PF00090">
    <property type="entry name" value="TSP_1"/>
    <property type="match status" value="2"/>
</dbReference>
<dbReference type="Pfam" id="PF17217">
    <property type="entry name" value="UPA"/>
    <property type="match status" value="1"/>
</dbReference>
<dbReference type="Pfam" id="PF00791">
    <property type="entry name" value="ZU5"/>
    <property type="match status" value="1"/>
</dbReference>
<dbReference type="PRINTS" id="PR01705">
    <property type="entry name" value="TSP1REPEAT"/>
</dbReference>
<dbReference type="SMART" id="SM00005">
    <property type="entry name" value="DEATH"/>
    <property type="match status" value="1"/>
</dbReference>
<dbReference type="SMART" id="SM00409">
    <property type="entry name" value="IG"/>
    <property type="match status" value="1"/>
</dbReference>
<dbReference type="SMART" id="SM00408">
    <property type="entry name" value="IGc2"/>
    <property type="match status" value="1"/>
</dbReference>
<dbReference type="SMART" id="SM00209">
    <property type="entry name" value="TSP1"/>
    <property type="match status" value="2"/>
</dbReference>
<dbReference type="SMART" id="SM00218">
    <property type="entry name" value="ZU5"/>
    <property type="match status" value="1"/>
</dbReference>
<dbReference type="SUPFAM" id="SSF47986">
    <property type="entry name" value="DEATH domain"/>
    <property type="match status" value="1"/>
</dbReference>
<dbReference type="SUPFAM" id="SSF48726">
    <property type="entry name" value="Immunoglobulin"/>
    <property type="match status" value="2"/>
</dbReference>
<dbReference type="SUPFAM" id="SSF82895">
    <property type="entry name" value="TSP-1 type 1 repeat"/>
    <property type="match status" value="2"/>
</dbReference>
<dbReference type="PROSITE" id="PS50835">
    <property type="entry name" value="IG_LIKE"/>
    <property type="match status" value="1"/>
</dbReference>
<dbReference type="PROSITE" id="PS50092">
    <property type="entry name" value="TSP1"/>
    <property type="match status" value="2"/>
</dbReference>
<dbReference type="PROSITE" id="PS51145">
    <property type="entry name" value="ZU5"/>
    <property type="match status" value="1"/>
</dbReference>
<sequence>MRKGLRATAARCGLGLGYLLQMLVLPALALLSASGTGSAAQDDDFFHELPETFPSDPPEPLPHFLIEPEEAYIVKNKPVNLYCKASPATQIYFKCNSEWVHQKDHIVDERVDETSGLIVREVSIEISRQQVEELFGPEDYWCQCVAWSSAGTTKSRKAYVRIAYLRKTFEQEPLGKEVSLEQEVLLQCRPPEGIPVAEVEWLKNEDIIDPVEDRNFYITIDHNLIIKQARLSDTANYTCVAKNIVAKRKSTTATVIVYVNGGWSTWTEWSVCNSRCGRGYQKRTRTCTNPAPLNGGAFCEGQSVQKIACTTLCPVDGRWTPWSKWSTCGTECTHWRRRECTAPAPKNGGKDCDGLVLQSKNCTDGLCMQTAPDSDDVALYVGIVIAVIVCLAISVVVALFVYRKNHRDFESDIIDSSALNGGFQPVNIKAARQDLLAVPPDLTSAAAMYRGPVYALHDVSDKIPMTNSPILDPLPNLKIKVYNTSGAVTPQDDLSEFTSKLSPQMTQSLLENEALSLKNQSLARQTDPSCTAFGSFNSLGGHLIVPNSGVSLLIPAGAIPQGRVYEMYVTVHRKETMRPPMDDSQTLLTPVVSCGPPGALLTRPVVLTMHHCADPNTEDWKILLKNQAAQGQWEDVVVVGEENFTTPCYIQLDAEACHILTENLSTYALVGHSTTKAAAKRLKLAIFGPLCCSSLEYSIRVYCLDDTQDALKEILHLERQMGGQLLEEPKALHFKGSTHNLRLSIHDIAHSLWKSKLLAKYQEIPFYHVWSGSQRNLHCTFTLERFSLNTVELVCKLCVRQVEGEGQIFQLNCTVSEEPTGIDLPLLDPANTITTVTGPSAFSIPLPIRQKLCSSLDAPQTRGHDWRMLAHKLNLDRYLNYFATKSSPTGVILDLWEAQNFPDGNLSMLAAVLEEMGRHETVVSLAAEGQY</sequence>
<gene>
    <name type="primary">UNC5C</name>
    <name type="synonym">UNC5H3</name>
</gene>
<organism>
    <name type="scientific">Homo sapiens</name>
    <name type="common">Human</name>
    <dbReference type="NCBI Taxonomy" id="9606"/>
    <lineage>
        <taxon>Eukaryota</taxon>
        <taxon>Metazoa</taxon>
        <taxon>Chordata</taxon>
        <taxon>Craniata</taxon>
        <taxon>Vertebrata</taxon>
        <taxon>Euteleostomi</taxon>
        <taxon>Mammalia</taxon>
        <taxon>Eutheria</taxon>
        <taxon>Euarchontoglires</taxon>
        <taxon>Primates</taxon>
        <taxon>Haplorrhini</taxon>
        <taxon>Catarrhini</taxon>
        <taxon>Hominidae</taxon>
        <taxon>Homo</taxon>
    </lineage>
</organism>
<keyword id="KW-0025">Alternative splicing</keyword>
<keyword id="KW-0026">Alzheimer disease</keyword>
<keyword id="KW-1008">Amyloidosis</keyword>
<keyword id="KW-0053">Apoptosis</keyword>
<keyword id="KW-1003">Cell membrane</keyword>
<keyword id="KW-0966">Cell projection</keyword>
<keyword id="KW-0217">Developmental protein</keyword>
<keyword id="KW-1015">Disulfide bond</keyword>
<keyword id="KW-0325">Glycoprotein</keyword>
<keyword id="KW-0393">Immunoglobulin domain</keyword>
<keyword id="KW-0472">Membrane</keyword>
<keyword id="KW-0523">Neurodegeneration</keyword>
<keyword id="KW-0597">Phosphoprotein</keyword>
<keyword id="KW-1267">Proteomics identification</keyword>
<keyword id="KW-0675">Receptor</keyword>
<keyword id="KW-1185">Reference proteome</keyword>
<keyword id="KW-0677">Repeat</keyword>
<keyword id="KW-0732">Signal</keyword>
<keyword id="KW-0770">Synapse</keyword>
<keyword id="KW-0771">Synaptosome</keyword>
<keyword id="KW-0812">Transmembrane</keyword>
<keyword id="KW-1133">Transmembrane helix</keyword>
<proteinExistence type="evidence at protein level"/>
<evidence type="ECO:0000250" key="1">
    <source>
        <dbReference type="UniProtKB" id="O08747"/>
    </source>
</evidence>
<evidence type="ECO:0000250" key="2">
    <source>
        <dbReference type="UniProtKB" id="Q6ZN44"/>
    </source>
</evidence>
<evidence type="ECO:0000250" key="3">
    <source>
        <dbReference type="UniProtKB" id="Q761X5"/>
    </source>
</evidence>
<evidence type="ECO:0000255" key="4"/>
<evidence type="ECO:0000255" key="5">
    <source>
        <dbReference type="PROSITE-ProRule" id="PRU00210"/>
    </source>
</evidence>
<evidence type="ECO:0000255" key="6">
    <source>
        <dbReference type="PROSITE-ProRule" id="PRU00485"/>
    </source>
</evidence>
<evidence type="ECO:0000269" key="7">
    <source>
    </source>
</evidence>
<evidence type="ECO:0000269" key="8">
    <source>
    </source>
</evidence>
<evidence type="ECO:0000269" key="9">
    <source>
    </source>
</evidence>
<evidence type="ECO:0000269" key="10">
    <source>
    </source>
</evidence>
<evidence type="ECO:0000269" key="11">
    <source>
    </source>
</evidence>
<evidence type="ECO:0000269" key="12">
    <source>
    </source>
</evidence>
<evidence type="ECO:0000303" key="13">
    <source>
    </source>
</evidence>
<evidence type="ECO:0000305" key="14"/>
<feature type="signal peptide" evidence="4">
    <location>
        <begin position="1"/>
        <end position="40"/>
    </location>
</feature>
<feature type="chain" id="PRO_0000036075" description="Netrin receptor UNC5C">
    <location>
        <begin position="41"/>
        <end position="931"/>
    </location>
</feature>
<feature type="topological domain" description="Extracellular" evidence="4">
    <location>
        <begin position="41"/>
        <end position="380"/>
    </location>
</feature>
<feature type="transmembrane region" description="Helical" evidence="4">
    <location>
        <begin position="381"/>
        <end position="401"/>
    </location>
</feature>
<feature type="topological domain" description="Cytoplasmic" evidence="4">
    <location>
        <begin position="402"/>
        <end position="931"/>
    </location>
</feature>
<feature type="domain" description="Ig-like">
    <location>
        <begin position="62"/>
        <end position="159"/>
    </location>
</feature>
<feature type="domain" description="Ig-like C2-type">
    <location>
        <begin position="161"/>
        <end position="256"/>
    </location>
</feature>
<feature type="domain" description="TSP type-1 1" evidence="5">
    <location>
        <begin position="260"/>
        <end position="314"/>
    </location>
</feature>
<feature type="domain" description="TSP type-1 2" evidence="5">
    <location>
        <begin position="316"/>
        <end position="368"/>
    </location>
</feature>
<feature type="domain" description="ZU5" evidence="6">
    <location>
        <begin position="530"/>
        <end position="673"/>
    </location>
</feature>
<feature type="domain" description="Death">
    <location>
        <begin position="850"/>
        <end position="929"/>
    </location>
</feature>
<feature type="region of interest" description="Required for netrin-mediated axon repulsion of neuronal growth cones" evidence="1">
    <location>
        <begin position="402"/>
        <end position="931"/>
    </location>
</feature>
<feature type="region of interest" description="Interaction with DCC" evidence="1">
    <location>
        <begin position="694"/>
        <end position="712"/>
    </location>
</feature>
<feature type="site" description="Cleavage; by caspase-3" evidence="3">
    <location>
        <begin position="415"/>
        <end position="416"/>
    </location>
</feature>
<feature type="modified residue" description="Phosphoserine" evidence="1">
    <location>
        <position position="502"/>
    </location>
</feature>
<feature type="modified residue" description="Phosphotyrosine" evidence="1">
    <location>
        <position position="568"/>
    </location>
</feature>
<feature type="glycosylation site" description="N-linked (GlcNAc...) asparagine" evidence="4">
    <location>
        <position position="236"/>
    </location>
</feature>
<feature type="glycosylation site" description="N-linked (GlcNAc...) asparagine" evidence="4">
    <location>
        <position position="361"/>
    </location>
</feature>
<feature type="disulfide bond" evidence="2">
    <location>
        <begin position="83"/>
        <end position="144"/>
    </location>
</feature>
<feature type="disulfide bond" evidence="2">
    <location>
        <begin position="95"/>
        <end position="142"/>
    </location>
</feature>
<feature type="disulfide bond" evidence="2">
    <location>
        <begin position="188"/>
        <end position="239"/>
    </location>
</feature>
<feature type="disulfide bond" evidence="5">
    <location>
        <begin position="272"/>
        <end position="309"/>
    </location>
</feature>
<feature type="disulfide bond" evidence="5">
    <location>
        <begin position="276"/>
        <end position="313"/>
    </location>
</feature>
<feature type="disulfide bond" evidence="5">
    <location>
        <begin position="287"/>
        <end position="299"/>
    </location>
</feature>
<feature type="disulfide bond" evidence="2">
    <location>
        <begin position="328"/>
        <end position="362"/>
    </location>
</feature>
<feature type="disulfide bond" evidence="2">
    <location>
        <begin position="332"/>
        <end position="367"/>
    </location>
</feature>
<feature type="disulfide bond" evidence="2">
    <location>
        <begin position="340"/>
        <end position="352"/>
    </location>
</feature>
<feature type="splice variant" id="VSP_011700" description="In isoform 2." evidence="13">
    <original>T</original>
    <variation>SFIYPISTEQRTQNEYGFSS</variation>
    <location>
        <position position="370"/>
    </location>
</feature>
<feature type="splice variant" id="VSP_011701" description="In isoform 2." evidence="13">
    <location>
        <begin position="579"/>
        <end position="931"/>
    </location>
</feature>
<feature type="sequence variant" id="VAR_019731" description="In dbSNP:rs2306715.">
    <original>G</original>
    <variation>V</variation>
    <location>
        <position position="37"/>
    </location>
</feature>
<feature type="sequence variant" id="VAR_019732" description="In dbSNP:rs2289043." evidence="12">
    <original>M</original>
    <variation>T</variation>
    <location>
        <position position="721"/>
    </location>
</feature>
<feature type="sequence variant" id="VAR_081368" description="In AD; increased susceptibility to neuronal cell death; dbSNP:rs137875858." evidence="9 10">
    <original>T</original>
    <variation>M</variation>
    <location>
        <position position="835"/>
    </location>
</feature>
<feature type="sequence variant" id="VAR_055327" description="In dbSNP:rs34585936.">
    <original>A</original>
    <variation>T</variation>
    <location>
        <position position="841"/>
    </location>
</feature>
<feature type="sequence conflict" description="In Ref. 3; AAH41156." evidence="14" ref="3">
    <original>T</original>
    <variation>I</variation>
    <location>
        <position position="219"/>
    </location>
</feature>
<feature type="sequence conflict" description="In Ref. 1; AAC67491." evidence="14" ref="1">
    <original>T</original>
    <variation>S</variation>
    <location>
        <position position="489"/>
    </location>
</feature>
<feature type="sequence conflict" description="In Ref. 1; AAC67491." evidence="14" ref="1">
    <original>Q</original>
    <variation>K</variation>
    <location>
        <position position="651"/>
    </location>
</feature>
<name>UNC5C_HUMAN</name>
<comment type="function">
    <text evidence="1 3 11">Receptor for netrin required for axon guidance (By similarity). Mediates axon repulsion of neuronal growth cones in the developing nervous system upon ligand binding (By similarity). NTN1/Netrin-1 binding might cause dissociation of UNC5C from polymerized TUBB3 in microtubules and thereby lead to increased microtubule dynamics and axon repulsion (PubMed:28483977). Axon repulsion in growth cones may also be caused by its association with DCC that may trigger signaling for repulsion (By similarity). Might also collaborate with DSCAM in NTN1-mediated axon repulsion independently of DCC (By similarity). Also involved in corticospinal tract axon guidance independently of DCC (By similarity). Involved in dorsal root ganglion axon projection towards the spinal cord (PubMed:28483977). It also acts as a dependence receptor required for apoptosis induction when not associated with netrin ligand (By similarity).</text>
</comment>
<comment type="subunit">
    <text evidence="1 8 10 11">Interacts with DCC (via cytoplasmic domain) (By similarity). Interacts (tyrosine phosphorylated form) with PTPN11 (By similarity). Interacts (via extracellular domain) with FLRT3 (via extracellular domain) (By similarity). Interacts (via Ig-like C2-type domain) with DSCAM (via extracellular domain) (PubMed:22685302). Interacts (via death domain) with DAPK1 (PubMed:27068745). Interacts (via cytoplasmic domain) with TUBB3; this interaction is decreased by NTN1/Netrin-1 (PubMed:28483977).</text>
</comment>
<comment type="interaction">
    <interactant intactId="EBI-11343380">
        <id>O95185</id>
    </interactant>
    <interactant intactId="EBI-350989">
        <id>Q13509</id>
        <label>TUBB3</label>
    </interactant>
    <organismsDiffer>false</organismsDiffer>
    <experiments>2</experiments>
</comment>
<comment type="subcellular location">
    <subcellularLocation>
        <location evidence="9">Cell membrane</location>
        <topology evidence="4">Single-pass type I membrane protein</topology>
    </subcellularLocation>
    <subcellularLocation>
        <location evidence="9">Cell surface</location>
    </subcellularLocation>
    <subcellularLocation>
        <location evidence="3">Synapse</location>
        <location evidence="3">Synaptosome</location>
    </subcellularLocation>
    <subcellularLocation>
        <location evidence="1">Cell projection</location>
        <location evidence="1">Axon</location>
    </subcellularLocation>
    <subcellularLocation>
        <location evidence="1">Cell projection</location>
        <location evidence="1">Dendrite</location>
    </subcellularLocation>
    <subcellularLocation>
        <location evidence="1">Cell projection</location>
        <location evidence="1">Growth cone</location>
    </subcellularLocation>
    <subcellularLocation>
        <location evidence="1">Cell projection</location>
        <location evidence="1">Lamellipodium</location>
    </subcellularLocation>
    <subcellularLocation>
        <location evidence="1">Cell projection</location>
        <location evidence="1">Filopodium</location>
    </subcellularLocation>
</comment>
<comment type="alternative products">
    <event type="alternative splicing"/>
    <isoform>
        <id>O95185-1</id>
        <name>1</name>
        <sequence type="displayed"/>
    </isoform>
    <isoform>
        <id>O95185-2</id>
        <name>2</name>
        <sequence type="described" ref="VSP_011700 VSP_011701"/>
    </isoform>
</comment>
<comment type="tissue specificity">
    <text evidence="9 12">Mainly expressed in brain (PubMed:9782087). Expressed in temporal lobe cortical neurons and in neurons of the hippocampal pyramidal layer (PubMed:25419706). Also expressed in kidney (PubMed:9782087). Not expressed in developing or adult lung (PubMed:9782087).</text>
</comment>
<comment type="PTM">
    <text evidence="3">Proteolytically cleaved by caspases during apoptosis. The cleavage does not take place when the receptor is associated with netrin ligand. Its cleavage by caspases is required to induce apoptosis.</text>
</comment>
<comment type="PTM">
    <text evidence="1">Phosphorylated on different cytoplasmic tyrosine residues. Phosphorylation of Tyr-568 leads to an interaction with PTPN11 phosphatase, suggesting that its activity is regulated by phosphorylation/dephosphorylation. Tyrosine phosphorylation is netrin-dependent.</text>
</comment>
<comment type="disease" evidence="9 10">
    <disease id="DI-03832">
        <name>Alzheimer disease</name>
        <acronym>AD</acronym>
        <description>Alzheimer disease is a neurodegenerative disorder characterized by progressive dementia, loss of cognitive abilities, and deposition of fibrillar amyloid proteins as intraneuronal neurofibrillary tangles, extracellular amyloid plaques and vascular amyloid deposits. The major constituents of these plaques are neurotoxic amyloid-beta protein 40 and amyloid-beta protein 42, that are produced by the proteolysis of the transmembrane APP protein. The cytotoxic C-terminal fragments (CTFs) and the caspase-cleaved products, such as C31, are also implicated in neuronal death.</description>
        <dbReference type="MIM" id="104300"/>
    </disease>
    <text>Disease susceptibility may be associated with variants affecting the gene represented in this entry.</text>
</comment>
<comment type="miscellaneous">
    <text evidence="7">Down-regulated in multiple cancers including colorectal, breast, ovary, uterus, stomach, lung, or kidney cancers.</text>
</comment>
<comment type="similarity">
    <text evidence="14">Belongs to the unc-5 family.</text>
</comment>